<sequence>MNIQALINDKVSQALEAAGAPAGSPAAVRQSAKPQFGDYQANGVMGVAKKLGTNPREFAQKVLDVLDLDGIASKTEIAGPGFINIFLSEEFLAKQADAALADSRLGVAAEEAQTIVADYSAPNVAKEMHVGHLRSTIIGDAVVRTLEFLGHKVIRANHIGDWGTQFGMLIANLERVQQESGEVSMELADLEGFYRESKKLYDEDEEFAVKARNYVVKLQSGDEFCAEMWKKLVDVTMIQNQRNYDRLNVSLTRDDVMGESMYNDMLPKIVADLKAQGLAVEDDGAQVVFLEEFKNKDGEAMGVIVQKRDGGFLYTTTDIACAKYRYEELGADRVLYFIDSRQHQHLMQAWTIVRKAGYVPESVSLEHHAFGMMLGKDGKPFKTRAGGTVRLADLLDEAEVRAAQLIESKNPELDAEEKEKISKTVAMAAVKYSDLSKHRTTDYVFDWDNMLAFEGNTAPYMQYAYTRVASIFAKAGVAMDELQGDIQITDEKEKALIAKLLQFEEAVQSVAREGQPHIMCSYLFELAGQFSSFYEACPILVAEDEAVKQSRLKLAALTAKTIKQGLSLLGIETLERM</sequence>
<accession>Q87RD6</accession>
<name>SYR_VIBPA</name>
<reference key="1">
    <citation type="journal article" date="2003" name="Lancet">
        <title>Genome sequence of Vibrio parahaemolyticus: a pathogenic mechanism distinct from that of V. cholerae.</title>
        <authorList>
            <person name="Makino K."/>
            <person name="Oshima K."/>
            <person name="Kurokawa K."/>
            <person name="Yokoyama K."/>
            <person name="Uda T."/>
            <person name="Tagomori K."/>
            <person name="Iijima Y."/>
            <person name="Najima M."/>
            <person name="Nakano M."/>
            <person name="Yamashita A."/>
            <person name="Kubota Y."/>
            <person name="Kimura S."/>
            <person name="Yasunaga T."/>
            <person name="Honda T."/>
            <person name="Shinagawa H."/>
            <person name="Hattori M."/>
            <person name="Iida T."/>
        </authorList>
    </citation>
    <scope>NUCLEOTIDE SEQUENCE [LARGE SCALE GENOMIC DNA]</scope>
    <source>
        <strain>RIMD 2210633</strain>
    </source>
</reference>
<gene>
    <name evidence="1" type="primary">argS</name>
    <name type="ordered locus">VP0861</name>
</gene>
<protein>
    <recommendedName>
        <fullName evidence="1">Arginine--tRNA ligase</fullName>
        <ecNumber evidence="1">6.1.1.19</ecNumber>
    </recommendedName>
    <alternativeName>
        <fullName evidence="1">Arginyl-tRNA synthetase</fullName>
        <shortName evidence="1">ArgRS</shortName>
    </alternativeName>
</protein>
<evidence type="ECO:0000255" key="1">
    <source>
        <dbReference type="HAMAP-Rule" id="MF_00123"/>
    </source>
</evidence>
<dbReference type="EC" id="6.1.1.19" evidence="1"/>
<dbReference type="EMBL" id="BA000031">
    <property type="protein sequence ID" value="BAC59124.1"/>
    <property type="molecule type" value="Genomic_DNA"/>
</dbReference>
<dbReference type="RefSeq" id="NP_797240.1">
    <property type="nucleotide sequence ID" value="NC_004603.1"/>
</dbReference>
<dbReference type="RefSeq" id="WP_005455463.1">
    <property type="nucleotide sequence ID" value="NC_004603.1"/>
</dbReference>
<dbReference type="SMR" id="Q87RD6"/>
<dbReference type="DNASU" id="1188358"/>
<dbReference type="GeneID" id="1188358"/>
<dbReference type="KEGG" id="vpa:VP0861"/>
<dbReference type="PATRIC" id="fig|223926.6.peg.815"/>
<dbReference type="eggNOG" id="COG0018">
    <property type="taxonomic scope" value="Bacteria"/>
</dbReference>
<dbReference type="HOGENOM" id="CLU_006406_5_1_6"/>
<dbReference type="Proteomes" id="UP000002493">
    <property type="component" value="Chromosome 1"/>
</dbReference>
<dbReference type="GO" id="GO:0005737">
    <property type="term" value="C:cytoplasm"/>
    <property type="evidence" value="ECO:0007669"/>
    <property type="project" value="UniProtKB-SubCell"/>
</dbReference>
<dbReference type="GO" id="GO:0004814">
    <property type="term" value="F:arginine-tRNA ligase activity"/>
    <property type="evidence" value="ECO:0007669"/>
    <property type="project" value="UniProtKB-UniRule"/>
</dbReference>
<dbReference type="GO" id="GO:0005524">
    <property type="term" value="F:ATP binding"/>
    <property type="evidence" value="ECO:0007669"/>
    <property type="project" value="UniProtKB-UniRule"/>
</dbReference>
<dbReference type="GO" id="GO:0006420">
    <property type="term" value="P:arginyl-tRNA aminoacylation"/>
    <property type="evidence" value="ECO:0007669"/>
    <property type="project" value="UniProtKB-UniRule"/>
</dbReference>
<dbReference type="CDD" id="cd07956">
    <property type="entry name" value="Anticodon_Ia_Arg"/>
    <property type="match status" value="1"/>
</dbReference>
<dbReference type="CDD" id="cd00671">
    <property type="entry name" value="ArgRS_core"/>
    <property type="match status" value="1"/>
</dbReference>
<dbReference type="FunFam" id="1.10.730.10:FF:000001">
    <property type="entry name" value="Arginine--tRNA ligase"/>
    <property type="match status" value="1"/>
</dbReference>
<dbReference type="FunFam" id="3.40.50.620:FF:000030">
    <property type="entry name" value="Arginine--tRNA ligase"/>
    <property type="match status" value="1"/>
</dbReference>
<dbReference type="Gene3D" id="3.30.1360.70">
    <property type="entry name" value="Arginyl tRNA synthetase N-terminal domain"/>
    <property type="match status" value="1"/>
</dbReference>
<dbReference type="Gene3D" id="3.40.50.620">
    <property type="entry name" value="HUPs"/>
    <property type="match status" value="1"/>
</dbReference>
<dbReference type="Gene3D" id="1.10.730.10">
    <property type="entry name" value="Isoleucyl-tRNA Synthetase, Domain 1"/>
    <property type="match status" value="1"/>
</dbReference>
<dbReference type="HAMAP" id="MF_00123">
    <property type="entry name" value="Arg_tRNA_synth"/>
    <property type="match status" value="1"/>
</dbReference>
<dbReference type="InterPro" id="IPR001412">
    <property type="entry name" value="aa-tRNA-synth_I_CS"/>
</dbReference>
<dbReference type="InterPro" id="IPR001278">
    <property type="entry name" value="Arg-tRNA-ligase"/>
</dbReference>
<dbReference type="InterPro" id="IPR005148">
    <property type="entry name" value="Arg-tRNA-synth_N"/>
</dbReference>
<dbReference type="InterPro" id="IPR036695">
    <property type="entry name" value="Arg-tRNA-synth_N_sf"/>
</dbReference>
<dbReference type="InterPro" id="IPR035684">
    <property type="entry name" value="ArgRS_core"/>
</dbReference>
<dbReference type="InterPro" id="IPR008909">
    <property type="entry name" value="DALR_anticod-bd"/>
</dbReference>
<dbReference type="InterPro" id="IPR014729">
    <property type="entry name" value="Rossmann-like_a/b/a_fold"/>
</dbReference>
<dbReference type="InterPro" id="IPR009080">
    <property type="entry name" value="tRNAsynth_Ia_anticodon-bd"/>
</dbReference>
<dbReference type="NCBIfam" id="TIGR00456">
    <property type="entry name" value="argS"/>
    <property type="match status" value="1"/>
</dbReference>
<dbReference type="PANTHER" id="PTHR11956:SF5">
    <property type="entry name" value="ARGININE--TRNA LIGASE, CYTOPLASMIC"/>
    <property type="match status" value="1"/>
</dbReference>
<dbReference type="PANTHER" id="PTHR11956">
    <property type="entry name" value="ARGINYL-TRNA SYNTHETASE"/>
    <property type="match status" value="1"/>
</dbReference>
<dbReference type="Pfam" id="PF03485">
    <property type="entry name" value="Arg_tRNA_synt_N"/>
    <property type="match status" value="1"/>
</dbReference>
<dbReference type="Pfam" id="PF05746">
    <property type="entry name" value="DALR_1"/>
    <property type="match status" value="1"/>
</dbReference>
<dbReference type="Pfam" id="PF00750">
    <property type="entry name" value="tRNA-synt_1d"/>
    <property type="match status" value="1"/>
</dbReference>
<dbReference type="PRINTS" id="PR01038">
    <property type="entry name" value="TRNASYNTHARG"/>
</dbReference>
<dbReference type="SMART" id="SM01016">
    <property type="entry name" value="Arg_tRNA_synt_N"/>
    <property type="match status" value="1"/>
</dbReference>
<dbReference type="SMART" id="SM00836">
    <property type="entry name" value="DALR_1"/>
    <property type="match status" value="1"/>
</dbReference>
<dbReference type="SUPFAM" id="SSF47323">
    <property type="entry name" value="Anticodon-binding domain of a subclass of class I aminoacyl-tRNA synthetases"/>
    <property type="match status" value="1"/>
</dbReference>
<dbReference type="SUPFAM" id="SSF55190">
    <property type="entry name" value="Arginyl-tRNA synthetase (ArgRS), N-terminal 'additional' domain"/>
    <property type="match status" value="1"/>
</dbReference>
<dbReference type="SUPFAM" id="SSF52374">
    <property type="entry name" value="Nucleotidylyl transferase"/>
    <property type="match status" value="1"/>
</dbReference>
<dbReference type="PROSITE" id="PS00178">
    <property type="entry name" value="AA_TRNA_LIGASE_I"/>
    <property type="match status" value="1"/>
</dbReference>
<feature type="chain" id="PRO_0000151633" description="Arginine--tRNA ligase">
    <location>
        <begin position="1"/>
        <end position="577"/>
    </location>
</feature>
<feature type="short sequence motif" description="'HIGH' region">
    <location>
        <begin position="122"/>
        <end position="132"/>
    </location>
</feature>
<comment type="catalytic activity">
    <reaction evidence="1">
        <text>tRNA(Arg) + L-arginine + ATP = L-arginyl-tRNA(Arg) + AMP + diphosphate</text>
        <dbReference type="Rhea" id="RHEA:20301"/>
        <dbReference type="Rhea" id="RHEA-COMP:9658"/>
        <dbReference type="Rhea" id="RHEA-COMP:9673"/>
        <dbReference type="ChEBI" id="CHEBI:30616"/>
        <dbReference type="ChEBI" id="CHEBI:32682"/>
        <dbReference type="ChEBI" id="CHEBI:33019"/>
        <dbReference type="ChEBI" id="CHEBI:78442"/>
        <dbReference type="ChEBI" id="CHEBI:78513"/>
        <dbReference type="ChEBI" id="CHEBI:456215"/>
        <dbReference type="EC" id="6.1.1.19"/>
    </reaction>
</comment>
<comment type="subunit">
    <text evidence="1">Monomer.</text>
</comment>
<comment type="subcellular location">
    <subcellularLocation>
        <location evidence="1">Cytoplasm</location>
    </subcellularLocation>
</comment>
<comment type="similarity">
    <text evidence="1">Belongs to the class-I aminoacyl-tRNA synthetase family.</text>
</comment>
<organism>
    <name type="scientific">Vibrio parahaemolyticus serotype O3:K6 (strain RIMD 2210633)</name>
    <dbReference type="NCBI Taxonomy" id="223926"/>
    <lineage>
        <taxon>Bacteria</taxon>
        <taxon>Pseudomonadati</taxon>
        <taxon>Pseudomonadota</taxon>
        <taxon>Gammaproteobacteria</taxon>
        <taxon>Vibrionales</taxon>
        <taxon>Vibrionaceae</taxon>
        <taxon>Vibrio</taxon>
    </lineage>
</organism>
<keyword id="KW-0030">Aminoacyl-tRNA synthetase</keyword>
<keyword id="KW-0067">ATP-binding</keyword>
<keyword id="KW-0963">Cytoplasm</keyword>
<keyword id="KW-0436">Ligase</keyword>
<keyword id="KW-0547">Nucleotide-binding</keyword>
<keyword id="KW-0648">Protein biosynthesis</keyword>
<proteinExistence type="inferred from homology"/>